<evidence type="ECO:0000255" key="1">
    <source>
        <dbReference type="HAMAP-Rule" id="MF_00518"/>
    </source>
</evidence>
<feature type="chain" id="PRO_1000211731" description="D-aminoacyl-tRNA deacylase">
    <location>
        <begin position="1"/>
        <end position="152"/>
    </location>
</feature>
<feature type="short sequence motif" description="Gly-cisPro motif, important for rejection of L-amino acids" evidence="1">
    <location>
        <begin position="137"/>
        <end position="138"/>
    </location>
</feature>
<organism>
    <name type="scientific">Geobacillus sp. (strain WCH70)</name>
    <dbReference type="NCBI Taxonomy" id="471223"/>
    <lineage>
        <taxon>Bacteria</taxon>
        <taxon>Bacillati</taxon>
        <taxon>Bacillota</taxon>
        <taxon>Bacilli</taxon>
        <taxon>Bacillales</taxon>
        <taxon>Anoxybacillaceae</taxon>
        <taxon>Geobacillus</taxon>
    </lineage>
</organism>
<gene>
    <name evidence="1" type="primary">dtd</name>
    <name type="ordered locus">GWCH70_2509</name>
</gene>
<sequence length="152" mass="16606">MRVVVQRAKHAKVTVNGEVVGSIDHGLVLLVGVTHSDTVEDAAFIADKIAHLRIFEDESGKMNLSVLDVGGEILSVSQFTLYGDCRKGRRPNFMEAAKPDRALPIYEAMNEALRQKGIRVETGKFGAMMEVELINDGPVTLIVESKEKAGNK</sequence>
<reference key="1">
    <citation type="submission" date="2009-06" db="EMBL/GenBank/DDBJ databases">
        <title>Complete sequence of chromosome of Geopacillus sp. WCH70.</title>
        <authorList>
            <consortium name="US DOE Joint Genome Institute"/>
            <person name="Lucas S."/>
            <person name="Copeland A."/>
            <person name="Lapidus A."/>
            <person name="Glavina del Rio T."/>
            <person name="Dalin E."/>
            <person name="Tice H."/>
            <person name="Bruce D."/>
            <person name="Goodwin L."/>
            <person name="Pitluck S."/>
            <person name="Chertkov O."/>
            <person name="Brettin T."/>
            <person name="Detter J.C."/>
            <person name="Han C."/>
            <person name="Larimer F."/>
            <person name="Land M."/>
            <person name="Hauser L."/>
            <person name="Kyrpides N."/>
            <person name="Mikhailova N."/>
            <person name="Brumm P."/>
            <person name="Mead D.A."/>
            <person name="Richardson P."/>
        </authorList>
    </citation>
    <scope>NUCLEOTIDE SEQUENCE [LARGE SCALE GENOMIC DNA]</scope>
    <source>
        <strain>WCH70</strain>
    </source>
</reference>
<dbReference type="EC" id="3.1.1.96" evidence="1"/>
<dbReference type="EMBL" id="CP001638">
    <property type="protein sequence ID" value="ACS25204.1"/>
    <property type="molecule type" value="Genomic_DNA"/>
</dbReference>
<dbReference type="SMR" id="C5D512"/>
<dbReference type="STRING" id="471223.GWCH70_2509"/>
<dbReference type="KEGG" id="gwc:GWCH70_2509"/>
<dbReference type="eggNOG" id="COG1490">
    <property type="taxonomic scope" value="Bacteria"/>
</dbReference>
<dbReference type="HOGENOM" id="CLU_076901_1_0_9"/>
<dbReference type="OrthoDB" id="9801395at2"/>
<dbReference type="GO" id="GO:0005737">
    <property type="term" value="C:cytoplasm"/>
    <property type="evidence" value="ECO:0007669"/>
    <property type="project" value="UniProtKB-SubCell"/>
</dbReference>
<dbReference type="GO" id="GO:0051500">
    <property type="term" value="F:D-tyrosyl-tRNA(Tyr) deacylase activity"/>
    <property type="evidence" value="ECO:0007669"/>
    <property type="project" value="TreeGrafter"/>
</dbReference>
<dbReference type="GO" id="GO:0106026">
    <property type="term" value="F:Gly-tRNA(Ala) deacylase activity"/>
    <property type="evidence" value="ECO:0007669"/>
    <property type="project" value="UniProtKB-UniRule"/>
</dbReference>
<dbReference type="GO" id="GO:0043908">
    <property type="term" value="F:Ser(Gly)-tRNA(Ala) hydrolase activity"/>
    <property type="evidence" value="ECO:0007669"/>
    <property type="project" value="UniProtKB-UniRule"/>
</dbReference>
<dbReference type="GO" id="GO:0000049">
    <property type="term" value="F:tRNA binding"/>
    <property type="evidence" value="ECO:0007669"/>
    <property type="project" value="UniProtKB-UniRule"/>
</dbReference>
<dbReference type="GO" id="GO:0019478">
    <property type="term" value="P:D-amino acid catabolic process"/>
    <property type="evidence" value="ECO:0007669"/>
    <property type="project" value="UniProtKB-UniRule"/>
</dbReference>
<dbReference type="CDD" id="cd00563">
    <property type="entry name" value="Dtyr_deacylase"/>
    <property type="match status" value="1"/>
</dbReference>
<dbReference type="FunFam" id="3.50.80.10:FF:000001">
    <property type="entry name" value="D-aminoacyl-tRNA deacylase"/>
    <property type="match status" value="1"/>
</dbReference>
<dbReference type="Gene3D" id="3.50.80.10">
    <property type="entry name" value="D-tyrosyl-tRNA(Tyr) deacylase"/>
    <property type="match status" value="1"/>
</dbReference>
<dbReference type="HAMAP" id="MF_00518">
    <property type="entry name" value="Deacylase_Dtd"/>
    <property type="match status" value="1"/>
</dbReference>
<dbReference type="InterPro" id="IPR003732">
    <property type="entry name" value="Daa-tRNA_deacyls_DTD"/>
</dbReference>
<dbReference type="InterPro" id="IPR023509">
    <property type="entry name" value="DTD-like_sf"/>
</dbReference>
<dbReference type="NCBIfam" id="TIGR00256">
    <property type="entry name" value="D-aminoacyl-tRNA deacylase"/>
    <property type="match status" value="1"/>
</dbReference>
<dbReference type="PANTHER" id="PTHR10472:SF5">
    <property type="entry name" value="D-AMINOACYL-TRNA DEACYLASE 1"/>
    <property type="match status" value="1"/>
</dbReference>
<dbReference type="PANTHER" id="PTHR10472">
    <property type="entry name" value="D-TYROSYL-TRNA TYR DEACYLASE"/>
    <property type="match status" value="1"/>
</dbReference>
<dbReference type="Pfam" id="PF02580">
    <property type="entry name" value="Tyr_Deacylase"/>
    <property type="match status" value="1"/>
</dbReference>
<dbReference type="SUPFAM" id="SSF69500">
    <property type="entry name" value="DTD-like"/>
    <property type="match status" value="1"/>
</dbReference>
<name>DTD_GEOSW</name>
<keyword id="KW-0963">Cytoplasm</keyword>
<keyword id="KW-0378">Hydrolase</keyword>
<keyword id="KW-0694">RNA-binding</keyword>
<keyword id="KW-0820">tRNA-binding</keyword>
<comment type="function">
    <text evidence="1">An aminoacyl-tRNA editing enzyme that deacylates mischarged D-aminoacyl-tRNAs. Also deacylates mischarged glycyl-tRNA(Ala), protecting cells against glycine mischarging by AlaRS. Acts via tRNA-based rather than protein-based catalysis; rejects L-amino acids rather than detecting D-amino acids in the active site. By recycling D-aminoacyl-tRNA to D-amino acids and free tRNA molecules, this enzyme counteracts the toxicity associated with the formation of D-aminoacyl-tRNA entities in vivo and helps enforce protein L-homochirality.</text>
</comment>
<comment type="catalytic activity">
    <reaction evidence="1">
        <text>glycyl-tRNA(Ala) + H2O = tRNA(Ala) + glycine + H(+)</text>
        <dbReference type="Rhea" id="RHEA:53744"/>
        <dbReference type="Rhea" id="RHEA-COMP:9657"/>
        <dbReference type="Rhea" id="RHEA-COMP:13640"/>
        <dbReference type="ChEBI" id="CHEBI:15377"/>
        <dbReference type="ChEBI" id="CHEBI:15378"/>
        <dbReference type="ChEBI" id="CHEBI:57305"/>
        <dbReference type="ChEBI" id="CHEBI:78442"/>
        <dbReference type="ChEBI" id="CHEBI:78522"/>
        <dbReference type="EC" id="3.1.1.96"/>
    </reaction>
</comment>
<comment type="catalytic activity">
    <reaction evidence="1">
        <text>a D-aminoacyl-tRNA + H2O = a tRNA + a D-alpha-amino acid + H(+)</text>
        <dbReference type="Rhea" id="RHEA:13953"/>
        <dbReference type="Rhea" id="RHEA-COMP:10123"/>
        <dbReference type="Rhea" id="RHEA-COMP:10124"/>
        <dbReference type="ChEBI" id="CHEBI:15377"/>
        <dbReference type="ChEBI" id="CHEBI:15378"/>
        <dbReference type="ChEBI" id="CHEBI:59871"/>
        <dbReference type="ChEBI" id="CHEBI:78442"/>
        <dbReference type="ChEBI" id="CHEBI:79333"/>
        <dbReference type="EC" id="3.1.1.96"/>
    </reaction>
</comment>
<comment type="subunit">
    <text evidence="1">Homodimer.</text>
</comment>
<comment type="subcellular location">
    <subcellularLocation>
        <location evidence="1">Cytoplasm</location>
    </subcellularLocation>
</comment>
<comment type="domain">
    <text evidence="1">A Gly-cisPro motif from one monomer fits into the active site of the other monomer to allow specific chiral rejection of L-amino acids.</text>
</comment>
<comment type="similarity">
    <text evidence="1">Belongs to the DTD family.</text>
</comment>
<accession>C5D512</accession>
<proteinExistence type="inferred from homology"/>
<protein>
    <recommendedName>
        <fullName evidence="1">D-aminoacyl-tRNA deacylase</fullName>
        <shortName evidence="1">DTD</shortName>
        <ecNumber evidence="1">3.1.1.96</ecNumber>
    </recommendedName>
    <alternativeName>
        <fullName evidence="1">Gly-tRNA(Ala) deacylase</fullName>
    </alternativeName>
</protein>